<reference key="1">
    <citation type="journal article" date="2005" name="DNA Res.">
        <title>Complete genome sequence of the facultative anaerobic magnetotactic bacterium Magnetospirillum sp. strain AMB-1.</title>
        <authorList>
            <person name="Matsunaga T."/>
            <person name="Okamura Y."/>
            <person name="Fukuda Y."/>
            <person name="Wahyudi A.T."/>
            <person name="Murase Y."/>
            <person name="Takeyama H."/>
        </authorList>
    </citation>
    <scope>NUCLEOTIDE SEQUENCE [LARGE SCALE GENOMIC DNA]</scope>
    <source>
        <strain>ATCC 700264 / AMB-1</strain>
    </source>
</reference>
<name>RS7_PARM1</name>
<feature type="chain" id="PRO_0000241760" description="Small ribosomal subunit protein uS7">
    <location>
        <begin position="1"/>
        <end position="156"/>
    </location>
</feature>
<dbReference type="EMBL" id="AP007255">
    <property type="protein sequence ID" value="BAE51938.1"/>
    <property type="molecule type" value="Genomic_DNA"/>
</dbReference>
<dbReference type="RefSeq" id="WP_011385501.1">
    <property type="nucleotide sequence ID" value="NC_007626.1"/>
</dbReference>
<dbReference type="SMR" id="Q2W2I7"/>
<dbReference type="STRING" id="342108.amb3134"/>
<dbReference type="KEGG" id="mag:amb3134"/>
<dbReference type="HOGENOM" id="CLU_072226_1_1_5"/>
<dbReference type="OrthoDB" id="9807653at2"/>
<dbReference type="Proteomes" id="UP000007058">
    <property type="component" value="Chromosome"/>
</dbReference>
<dbReference type="GO" id="GO:0015935">
    <property type="term" value="C:small ribosomal subunit"/>
    <property type="evidence" value="ECO:0007669"/>
    <property type="project" value="InterPro"/>
</dbReference>
<dbReference type="GO" id="GO:0019843">
    <property type="term" value="F:rRNA binding"/>
    <property type="evidence" value="ECO:0007669"/>
    <property type="project" value="UniProtKB-UniRule"/>
</dbReference>
<dbReference type="GO" id="GO:0003735">
    <property type="term" value="F:structural constituent of ribosome"/>
    <property type="evidence" value="ECO:0007669"/>
    <property type="project" value="InterPro"/>
</dbReference>
<dbReference type="GO" id="GO:0000049">
    <property type="term" value="F:tRNA binding"/>
    <property type="evidence" value="ECO:0007669"/>
    <property type="project" value="UniProtKB-UniRule"/>
</dbReference>
<dbReference type="GO" id="GO:0006412">
    <property type="term" value="P:translation"/>
    <property type="evidence" value="ECO:0007669"/>
    <property type="project" value="UniProtKB-UniRule"/>
</dbReference>
<dbReference type="CDD" id="cd14869">
    <property type="entry name" value="uS7_Bacteria"/>
    <property type="match status" value="1"/>
</dbReference>
<dbReference type="FunFam" id="1.10.455.10:FF:000001">
    <property type="entry name" value="30S ribosomal protein S7"/>
    <property type="match status" value="1"/>
</dbReference>
<dbReference type="Gene3D" id="1.10.455.10">
    <property type="entry name" value="Ribosomal protein S7 domain"/>
    <property type="match status" value="1"/>
</dbReference>
<dbReference type="HAMAP" id="MF_00480_B">
    <property type="entry name" value="Ribosomal_uS7_B"/>
    <property type="match status" value="1"/>
</dbReference>
<dbReference type="InterPro" id="IPR000235">
    <property type="entry name" value="Ribosomal_uS7"/>
</dbReference>
<dbReference type="InterPro" id="IPR005717">
    <property type="entry name" value="Ribosomal_uS7_bac/org-type"/>
</dbReference>
<dbReference type="InterPro" id="IPR020606">
    <property type="entry name" value="Ribosomal_uS7_CS"/>
</dbReference>
<dbReference type="InterPro" id="IPR023798">
    <property type="entry name" value="Ribosomal_uS7_dom"/>
</dbReference>
<dbReference type="InterPro" id="IPR036823">
    <property type="entry name" value="Ribosomal_uS7_dom_sf"/>
</dbReference>
<dbReference type="NCBIfam" id="TIGR01029">
    <property type="entry name" value="rpsG_bact"/>
    <property type="match status" value="1"/>
</dbReference>
<dbReference type="PANTHER" id="PTHR11205">
    <property type="entry name" value="RIBOSOMAL PROTEIN S7"/>
    <property type="match status" value="1"/>
</dbReference>
<dbReference type="Pfam" id="PF00177">
    <property type="entry name" value="Ribosomal_S7"/>
    <property type="match status" value="1"/>
</dbReference>
<dbReference type="PIRSF" id="PIRSF002122">
    <property type="entry name" value="RPS7p_RPS7a_RPS5e_RPS7o"/>
    <property type="match status" value="1"/>
</dbReference>
<dbReference type="SUPFAM" id="SSF47973">
    <property type="entry name" value="Ribosomal protein S7"/>
    <property type="match status" value="1"/>
</dbReference>
<dbReference type="PROSITE" id="PS00052">
    <property type="entry name" value="RIBOSOMAL_S7"/>
    <property type="match status" value="1"/>
</dbReference>
<sequence length="156" mass="17799">MSRRHAAEKREITPDAKFHDYVVAKFMNCLMLDGKKSAAEAIVYGALDKIQAKTGQDPLKVFHEALDNVKPALEVRSRRVGGATYQVPVEVRSDRRQALAIRWLIDYSRKRSETTMIDRLSGELLDAANNRGAAVKKREDTHRMAEANKAFSHYRW</sequence>
<proteinExistence type="inferred from homology"/>
<comment type="function">
    <text evidence="1">One of the primary rRNA binding proteins, it binds directly to 16S rRNA where it nucleates assembly of the head domain of the 30S subunit. Is located at the subunit interface close to the decoding center, probably blocks exit of the E-site tRNA.</text>
</comment>
<comment type="subunit">
    <text evidence="1">Part of the 30S ribosomal subunit. Contacts proteins S9 and S11.</text>
</comment>
<comment type="similarity">
    <text evidence="1">Belongs to the universal ribosomal protein uS7 family.</text>
</comment>
<protein>
    <recommendedName>
        <fullName evidence="1">Small ribosomal subunit protein uS7</fullName>
    </recommendedName>
    <alternativeName>
        <fullName evidence="2">30S ribosomal protein S7</fullName>
    </alternativeName>
</protein>
<gene>
    <name evidence="1" type="primary">rpsG</name>
    <name type="ordered locus">amb3134</name>
</gene>
<evidence type="ECO:0000255" key="1">
    <source>
        <dbReference type="HAMAP-Rule" id="MF_00480"/>
    </source>
</evidence>
<evidence type="ECO:0000305" key="2"/>
<keyword id="KW-0687">Ribonucleoprotein</keyword>
<keyword id="KW-0689">Ribosomal protein</keyword>
<keyword id="KW-0694">RNA-binding</keyword>
<keyword id="KW-0699">rRNA-binding</keyword>
<keyword id="KW-0820">tRNA-binding</keyword>
<organism>
    <name type="scientific">Paramagnetospirillum magneticum (strain ATCC 700264 / AMB-1)</name>
    <name type="common">Magnetospirillum magneticum</name>
    <dbReference type="NCBI Taxonomy" id="342108"/>
    <lineage>
        <taxon>Bacteria</taxon>
        <taxon>Pseudomonadati</taxon>
        <taxon>Pseudomonadota</taxon>
        <taxon>Alphaproteobacteria</taxon>
        <taxon>Rhodospirillales</taxon>
        <taxon>Magnetospirillaceae</taxon>
        <taxon>Paramagnetospirillum</taxon>
    </lineage>
</organism>
<accession>Q2W2I7</accession>